<evidence type="ECO:0000255" key="1">
    <source>
        <dbReference type="HAMAP-Rule" id="MF_00109"/>
    </source>
</evidence>
<keyword id="KW-0028">Amino-acid biosynthesis</keyword>
<keyword id="KW-0057">Aromatic amino acid biosynthesis</keyword>
<keyword id="KW-0067">ATP-binding</keyword>
<keyword id="KW-0963">Cytoplasm</keyword>
<keyword id="KW-0418">Kinase</keyword>
<keyword id="KW-0460">Magnesium</keyword>
<keyword id="KW-0479">Metal-binding</keyword>
<keyword id="KW-0547">Nucleotide-binding</keyword>
<keyword id="KW-0808">Transferase</keyword>
<dbReference type="EC" id="2.7.1.71" evidence="1"/>
<dbReference type="EMBL" id="BX936398">
    <property type="protein sequence ID" value="CAH22988.1"/>
    <property type="molecule type" value="Genomic_DNA"/>
</dbReference>
<dbReference type="RefSeq" id="WP_002208899.1">
    <property type="nucleotide sequence ID" value="NZ_CP009712.1"/>
</dbReference>
<dbReference type="SMR" id="Q664L9"/>
<dbReference type="GeneID" id="96663260"/>
<dbReference type="KEGG" id="ypo:BZ17_2836"/>
<dbReference type="KEGG" id="yps:YPTB3750"/>
<dbReference type="PATRIC" id="fig|273123.14.peg.2976"/>
<dbReference type="UniPathway" id="UPA00053">
    <property type="reaction ID" value="UER00088"/>
</dbReference>
<dbReference type="Proteomes" id="UP000001011">
    <property type="component" value="Chromosome"/>
</dbReference>
<dbReference type="GO" id="GO:0005829">
    <property type="term" value="C:cytosol"/>
    <property type="evidence" value="ECO:0007669"/>
    <property type="project" value="TreeGrafter"/>
</dbReference>
<dbReference type="GO" id="GO:0005524">
    <property type="term" value="F:ATP binding"/>
    <property type="evidence" value="ECO:0007669"/>
    <property type="project" value="UniProtKB-UniRule"/>
</dbReference>
<dbReference type="GO" id="GO:0000287">
    <property type="term" value="F:magnesium ion binding"/>
    <property type="evidence" value="ECO:0007669"/>
    <property type="project" value="UniProtKB-UniRule"/>
</dbReference>
<dbReference type="GO" id="GO:0004765">
    <property type="term" value="F:shikimate kinase activity"/>
    <property type="evidence" value="ECO:0007669"/>
    <property type="project" value="UniProtKB-UniRule"/>
</dbReference>
<dbReference type="GO" id="GO:0008652">
    <property type="term" value="P:amino acid biosynthetic process"/>
    <property type="evidence" value="ECO:0007669"/>
    <property type="project" value="UniProtKB-KW"/>
</dbReference>
<dbReference type="GO" id="GO:0009073">
    <property type="term" value="P:aromatic amino acid family biosynthetic process"/>
    <property type="evidence" value="ECO:0007669"/>
    <property type="project" value="UniProtKB-KW"/>
</dbReference>
<dbReference type="GO" id="GO:0009423">
    <property type="term" value="P:chorismate biosynthetic process"/>
    <property type="evidence" value="ECO:0007669"/>
    <property type="project" value="UniProtKB-UniRule"/>
</dbReference>
<dbReference type="CDD" id="cd00464">
    <property type="entry name" value="SK"/>
    <property type="match status" value="1"/>
</dbReference>
<dbReference type="FunFam" id="3.40.50.300:FF:000099">
    <property type="entry name" value="Shikimate kinase 1"/>
    <property type="match status" value="1"/>
</dbReference>
<dbReference type="Gene3D" id="3.40.50.300">
    <property type="entry name" value="P-loop containing nucleotide triphosphate hydrolases"/>
    <property type="match status" value="1"/>
</dbReference>
<dbReference type="HAMAP" id="MF_00109">
    <property type="entry name" value="Shikimate_kinase"/>
    <property type="match status" value="1"/>
</dbReference>
<dbReference type="InterPro" id="IPR027417">
    <property type="entry name" value="P-loop_NTPase"/>
</dbReference>
<dbReference type="InterPro" id="IPR031322">
    <property type="entry name" value="Shikimate/glucono_kinase"/>
</dbReference>
<dbReference type="InterPro" id="IPR000623">
    <property type="entry name" value="Shikimate_kinase/TSH1"/>
</dbReference>
<dbReference type="InterPro" id="IPR023000">
    <property type="entry name" value="Shikimate_kinase_CS"/>
</dbReference>
<dbReference type="NCBIfam" id="NF003456">
    <property type="entry name" value="PRK05057.1"/>
    <property type="match status" value="1"/>
</dbReference>
<dbReference type="PANTHER" id="PTHR21087">
    <property type="entry name" value="SHIKIMATE KINASE"/>
    <property type="match status" value="1"/>
</dbReference>
<dbReference type="PANTHER" id="PTHR21087:SF16">
    <property type="entry name" value="SHIKIMATE KINASE 1, CHLOROPLASTIC"/>
    <property type="match status" value="1"/>
</dbReference>
<dbReference type="Pfam" id="PF01202">
    <property type="entry name" value="SKI"/>
    <property type="match status" value="1"/>
</dbReference>
<dbReference type="PRINTS" id="PR01100">
    <property type="entry name" value="SHIKIMTKNASE"/>
</dbReference>
<dbReference type="SUPFAM" id="SSF52540">
    <property type="entry name" value="P-loop containing nucleoside triphosphate hydrolases"/>
    <property type="match status" value="1"/>
</dbReference>
<dbReference type="PROSITE" id="PS01128">
    <property type="entry name" value="SHIKIMATE_KINASE"/>
    <property type="match status" value="1"/>
</dbReference>
<sequence length="173" mass="19532">MAEKRNIFLVGPMGAGKSTIGRQLAQQLNMEFFDSDQEIERRTGADVGWVFDVEGEEGFRDREEKVINELTEKQGIVLATGGGSVKSRETRNRLSARGVVVYLETTIEKQLARTQRDKKRPLLQVDEPPREVLEALAKERNPLYEEIADVTIRTDDQSAKVVANQIINMLESN</sequence>
<name>AROK_YERPS</name>
<reference key="1">
    <citation type="journal article" date="2004" name="Proc. Natl. Acad. Sci. U.S.A.">
        <title>Insights into the evolution of Yersinia pestis through whole-genome comparison with Yersinia pseudotuberculosis.</title>
        <authorList>
            <person name="Chain P.S.G."/>
            <person name="Carniel E."/>
            <person name="Larimer F.W."/>
            <person name="Lamerdin J."/>
            <person name="Stoutland P.O."/>
            <person name="Regala W.M."/>
            <person name="Georgescu A.M."/>
            <person name="Vergez L.M."/>
            <person name="Land M.L."/>
            <person name="Motin V.L."/>
            <person name="Brubaker R.R."/>
            <person name="Fowler J."/>
            <person name="Hinnebusch J."/>
            <person name="Marceau M."/>
            <person name="Medigue C."/>
            <person name="Simonet M."/>
            <person name="Chenal-Francisque V."/>
            <person name="Souza B."/>
            <person name="Dacheux D."/>
            <person name="Elliott J.M."/>
            <person name="Derbise A."/>
            <person name="Hauser L.J."/>
            <person name="Garcia E."/>
        </authorList>
    </citation>
    <scope>NUCLEOTIDE SEQUENCE [LARGE SCALE GENOMIC DNA]</scope>
    <source>
        <strain>IP32953</strain>
    </source>
</reference>
<protein>
    <recommendedName>
        <fullName evidence="1">Shikimate kinase 1</fullName>
        <shortName evidence="1">SK 1</shortName>
        <ecNumber evidence="1">2.7.1.71</ecNumber>
    </recommendedName>
</protein>
<organism>
    <name type="scientific">Yersinia pseudotuberculosis serotype I (strain IP32953)</name>
    <dbReference type="NCBI Taxonomy" id="273123"/>
    <lineage>
        <taxon>Bacteria</taxon>
        <taxon>Pseudomonadati</taxon>
        <taxon>Pseudomonadota</taxon>
        <taxon>Gammaproteobacteria</taxon>
        <taxon>Enterobacterales</taxon>
        <taxon>Yersiniaceae</taxon>
        <taxon>Yersinia</taxon>
    </lineage>
</organism>
<accession>Q664L9</accession>
<gene>
    <name evidence="1" type="primary">aroK</name>
    <name type="ordered locus">YPTB3750</name>
</gene>
<feature type="chain" id="PRO_0000237963" description="Shikimate kinase 1">
    <location>
        <begin position="1"/>
        <end position="173"/>
    </location>
</feature>
<feature type="binding site" evidence="1">
    <location>
        <begin position="14"/>
        <end position="19"/>
    </location>
    <ligand>
        <name>ATP</name>
        <dbReference type="ChEBI" id="CHEBI:30616"/>
    </ligand>
</feature>
<feature type="binding site" evidence="1">
    <location>
        <position position="18"/>
    </location>
    <ligand>
        <name>Mg(2+)</name>
        <dbReference type="ChEBI" id="CHEBI:18420"/>
    </ligand>
</feature>
<feature type="binding site" evidence="1">
    <location>
        <position position="36"/>
    </location>
    <ligand>
        <name>substrate</name>
    </ligand>
</feature>
<feature type="binding site" evidence="1">
    <location>
        <position position="60"/>
    </location>
    <ligand>
        <name>substrate</name>
    </ligand>
</feature>
<feature type="binding site" evidence="1">
    <location>
        <position position="82"/>
    </location>
    <ligand>
        <name>substrate</name>
    </ligand>
</feature>
<feature type="binding site" evidence="1">
    <location>
        <position position="120"/>
    </location>
    <ligand>
        <name>ATP</name>
        <dbReference type="ChEBI" id="CHEBI:30616"/>
    </ligand>
</feature>
<feature type="binding site" evidence="1">
    <location>
        <position position="140"/>
    </location>
    <ligand>
        <name>substrate</name>
    </ligand>
</feature>
<feature type="binding site" evidence="1">
    <location>
        <position position="157"/>
    </location>
    <ligand>
        <name>ATP</name>
        <dbReference type="ChEBI" id="CHEBI:30616"/>
    </ligand>
</feature>
<proteinExistence type="inferred from homology"/>
<comment type="function">
    <text evidence="1">Catalyzes the specific phosphorylation of the 3-hydroxyl group of shikimic acid using ATP as a cosubstrate.</text>
</comment>
<comment type="catalytic activity">
    <reaction evidence="1">
        <text>shikimate + ATP = 3-phosphoshikimate + ADP + H(+)</text>
        <dbReference type="Rhea" id="RHEA:13121"/>
        <dbReference type="ChEBI" id="CHEBI:15378"/>
        <dbReference type="ChEBI" id="CHEBI:30616"/>
        <dbReference type="ChEBI" id="CHEBI:36208"/>
        <dbReference type="ChEBI" id="CHEBI:145989"/>
        <dbReference type="ChEBI" id="CHEBI:456216"/>
        <dbReference type="EC" id="2.7.1.71"/>
    </reaction>
</comment>
<comment type="cofactor">
    <cofactor evidence="1">
        <name>Mg(2+)</name>
        <dbReference type="ChEBI" id="CHEBI:18420"/>
    </cofactor>
    <text evidence="1">Binds 1 Mg(2+) ion per subunit.</text>
</comment>
<comment type="pathway">
    <text evidence="1">Metabolic intermediate biosynthesis; chorismate biosynthesis; chorismate from D-erythrose 4-phosphate and phosphoenolpyruvate: step 5/7.</text>
</comment>
<comment type="subunit">
    <text evidence="1">Monomer.</text>
</comment>
<comment type="subcellular location">
    <subcellularLocation>
        <location evidence="1">Cytoplasm</location>
    </subcellularLocation>
</comment>
<comment type="similarity">
    <text evidence="1">Belongs to the shikimate kinase family.</text>
</comment>